<feature type="initiator methionine" description="Removed" evidence="3">
    <location>
        <position position="1"/>
    </location>
</feature>
<feature type="chain" id="PRO_0000058891" description="Serine/threonine-protein phosphatase PP-Z1">
    <location>
        <begin position="2"/>
        <end position="692"/>
    </location>
</feature>
<feature type="region of interest" description="Disordered" evidence="4">
    <location>
        <begin position="1"/>
        <end position="309"/>
    </location>
</feature>
<feature type="region of interest" description="Disordered" evidence="4">
    <location>
        <begin position="321"/>
        <end position="357"/>
    </location>
</feature>
<feature type="region of interest" description="Disordered" evidence="4">
    <location>
        <begin position="672"/>
        <end position="692"/>
    </location>
</feature>
<feature type="compositionally biased region" description="Low complexity" evidence="4">
    <location>
        <begin position="32"/>
        <end position="41"/>
    </location>
</feature>
<feature type="compositionally biased region" description="Low complexity" evidence="4">
    <location>
        <begin position="49"/>
        <end position="69"/>
    </location>
</feature>
<feature type="compositionally biased region" description="Low complexity" evidence="4">
    <location>
        <begin position="91"/>
        <end position="122"/>
    </location>
</feature>
<feature type="compositionally biased region" description="Acidic residues" evidence="4">
    <location>
        <begin position="170"/>
        <end position="179"/>
    </location>
</feature>
<feature type="compositionally biased region" description="Low complexity" evidence="4">
    <location>
        <begin position="190"/>
        <end position="204"/>
    </location>
</feature>
<feature type="compositionally biased region" description="Basic and acidic residues" evidence="4">
    <location>
        <begin position="207"/>
        <end position="216"/>
    </location>
</feature>
<feature type="compositionally biased region" description="Polar residues" evidence="4">
    <location>
        <begin position="217"/>
        <end position="229"/>
    </location>
</feature>
<feature type="compositionally biased region" description="Polar residues" evidence="4">
    <location>
        <begin position="251"/>
        <end position="267"/>
    </location>
</feature>
<feature type="compositionally biased region" description="Low complexity" evidence="4">
    <location>
        <begin position="280"/>
        <end position="289"/>
    </location>
</feature>
<feature type="compositionally biased region" description="Basic and acidic residues" evidence="4">
    <location>
        <begin position="291"/>
        <end position="303"/>
    </location>
</feature>
<feature type="compositionally biased region" description="Polar residues" evidence="4">
    <location>
        <begin position="321"/>
        <end position="331"/>
    </location>
</feature>
<feature type="compositionally biased region" description="Polar residues" evidence="4">
    <location>
        <begin position="673"/>
        <end position="692"/>
    </location>
</feature>
<feature type="active site" description="Proton donor" evidence="1">
    <location>
        <position position="480"/>
    </location>
</feature>
<feature type="binding site" evidence="1">
    <location>
        <position position="419"/>
    </location>
    <ligand>
        <name>Mn(2+)</name>
        <dbReference type="ChEBI" id="CHEBI:29035"/>
        <label>1</label>
    </ligand>
</feature>
<feature type="binding site" evidence="1">
    <location>
        <position position="421"/>
    </location>
    <ligand>
        <name>Mn(2+)</name>
        <dbReference type="ChEBI" id="CHEBI:29035"/>
        <label>1</label>
    </ligand>
</feature>
<feature type="binding site" evidence="1">
    <location>
        <position position="447"/>
    </location>
    <ligand>
        <name>Mn(2+)</name>
        <dbReference type="ChEBI" id="CHEBI:29035"/>
        <label>1</label>
    </ligand>
</feature>
<feature type="binding site" evidence="1">
    <location>
        <position position="447"/>
    </location>
    <ligand>
        <name>Mn(2+)</name>
        <dbReference type="ChEBI" id="CHEBI:29035"/>
        <label>2</label>
    </ligand>
</feature>
<feature type="binding site" evidence="1">
    <location>
        <position position="479"/>
    </location>
    <ligand>
        <name>Mn(2+)</name>
        <dbReference type="ChEBI" id="CHEBI:29035"/>
        <label>2</label>
    </ligand>
</feature>
<feature type="binding site" evidence="1">
    <location>
        <position position="528"/>
    </location>
    <ligand>
        <name>Mn(2+)</name>
        <dbReference type="ChEBI" id="CHEBI:29035"/>
        <label>2</label>
    </ligand>
</feature>
<feature type="binding site" evidence="1">
    <location>
        <position position="603"/>
    </location>
    <ligand>
        <name>Mn(2+)</name>
        <dbReference type="ChEBI" id="CHEBI:29035"/>
        <label>2</label>
    </ligand>
</feature>
<feature type="modified residue" description="Phosphoserine" evidence="10">
    <location>
        <position position="49"/>
    </location>
</feature>
<feature type="modified residue" description="Phosphothreonine" evidence="10">
    <location>
        <position position="171"/>
    </location>
</feature>
<feature type="modified residue" description="Phosphoserine" evidence="2">
    <location>
        <position position="209"/>
    </location>
</feature>
<feature type="modified residue" description="Phosphoserine" evidence="11">
    <location>
        <position position="222"/>
    </location>
</feature>
<feature type="modified residue" description="Phosphothreonine" evidence="10">
    <location>
        <position position="261"/>
    </location>
</feature>
<feature type="modified residue" description="Phosphoserine" evidence="10">
    <location>
        <position position="265"/>
    </location>
</feature>
<feature type="modified residue" description="Phosphoserine" evidence="11">
    <location>
        <position position="690"/>
    </location>
</feature>
<feature type="lipid moiety-binding region" description="N-myristoyl glycine" evidence="3">
    <location>
        <position position="2"/>
    </location>
</feature>
<feature type="sequence conflict" description="In Ref. 1; AAA34898." evidence="8" ref="1">
    <original>E</original>
    <variation>G</variation>
    <location>
        <position position="340"/>
    </location>
</feature>
<feature type="sequence conflict" description="In Ref. 5; no nucleotide entry." evidence="8" ref="5">
    <original>S</original>
    <variation>A</variation>
    <location>
        <position position="440"/>
    </location>
</feature>
<feature type="sequence conflict" description="In Ref. 5; no nucleotide entry." evidence="8" ref="5">
    <original>E</original>
    <variation>K</variation>
    <location>
        <position position="649"/>
    </location>
</feature>
<organism>
    <name type="scientific">Saccharomyces cerevisiae (strain ATCC 204508 / S288c)</name>
    <name type="common">Baker's yeast</name>
    <dbReference type="NCBI Taxonomy" id="559292"/>
    <lineage>
        <taxon>Eukaryota</taxon>
        <taxon>Fungi</taxon>
        <taxon>Dikarya</taxon>
        <taxon>Ascomycota</taxon>
        <taxon>Saccharomycotina</taxon>
        <taxon>Saccharomycetes</taxon>
        <taxon>Saccharomycetales</taxon>
        <taxon>Saccharomycetaceae</taxon>
        <taxon>Saccharomyces</taxon>
    </lineage>
</organism>
<protein>
    <recommendedName>
        <fullName>Serine/threonine-protein phosphatase PP-Z1</fullName>
        <ecNumber>3.1.3.16</ecNumber>
    </recommendedName>
</protein>
<evidence type="ECO:0000250" key="1"/>
<evidence type="ECO:0000250" key="2">
    <source>
        <dbReference type="UniProtKB" id="P33329"/>
    </source>
</evidence>
<evidence type="ECO:0000255" key="3"/>
<evidence type="ECO:0000256" key="4">
    <source>
        <dbReference type="SAM" id="MobiDB-lite"/>
    </source>
</evidence>
<evidence type="ECO:0000269" key="5">
    <source>
    </source>
</evidence>
<evidence type="ECO:0000269" key="6">
    <source>
    </source>
</evidence>
<evidence type="ECO:0000269" key="7">
    <source>
    </source>
</evidence>
<evidence type="ECO:0000305" key="8"/>
<evidence type="ECO:0000305" key="9">
    <source>
    </source>
</evidence>
<evidence type="ECO:0007744" key="10">
    <source>
    </source>
</evidence>
<evidence type="ECO:0007744" key="11">
    <source>
    </source>
</evidence>
<keyword id="KW-0378">Hydrolase</keyword>
<keyword id="KW-0449">Lipoprotein</keyword>
<keyword id="KW-0464">Manganese</keyword>
<keyword id="KW-0479">Metal-binding</keyword>
<keyword id="KW-0519">Myristate</keyword>
<keyword id="KW-0597">Phosphoprotein</keyword>
<keyword id="KW-0904">Protein phosphatase</keyword>
<keyword id="KW-1185">Reference proteome</keyword>
<gene>
    <name type="primary">PPZ1</name>
    <name type="ordered locus">YML016C</name>
    <name type="ORF">YM9571.02C</name>
</gene>
<name>PPZ1_YEAST</name>
<comment type="function">
    <text>Essential for the maintenance of cell size and integrity in response to osmotic stress.</text>
</comment>
<comment type="catalytic activity">
    <reaction>
        <text>O-phospho-L-seryl-[protein] + H2O = L-seryl-[protein] + phosphate</text>
        <dbReference type="Rhea" id="RHEA:20629"/>
        <dbReference type="Rhea" id="RHEA-COMP:9863"/>
        <dbReference type="Rhea" id="RHEA-COMP:11604"/>
        <dbReference type="ChEBI" id="CHEBI:15377"/>
        <dbReference type="ChEBI" id="CHEBI:29999"/>
        <dbReference type="ChEBI" id="CHEBI:43474"/>
        <dbReference type="ChEBI" id="CHEBI:83421"/>
        <dbReference type="EC" id="3.1.3.16"/>
    </reaction>
</comment>
<comment type="catalytic activity">
    <reaction>
        <text>O-phospho-L-threonyl-[protein] + H2O = L-threonyl-[protein] + phosphate</text>
        <dbReference type="Rhea" id="RHEA:47004"/>
        <dbReference type="Rhea" id="RHEA-COMP:11060"/>
        <dbReference type="Rhea" id="RHEA-COMP:11605"/>
        <dbReference type="ChEBI" id="CHEBI:15377"/>
        <dbReference type="ChEBI" id="CHEBI:30013"/>
        <dbReference type="ChEBI" id="CHEBI:43474"/>
        <dbReference type="ChEBI" id="CHEBI:61977"/>
        <dbReference type="EC" id="3.1.3.16"/>
    </reaction>
</comment>
<comment type="cofactor">
    <cofactor evidence="1">
        <name>Mn(2+)</name>
        <dbReference type="ChEBI" id="CHEBI:29035"/>
    </cofactor>
    <text evidence="1">Binds 2 manganese ions per subunit.</text>
</comment>
<comment type="activity regulation">
    <text>Inhibited by the regulatory subunits VHS3 and SIS2.</text>
</comment>
<comment type="subunit">
    <text evidence="6 7">Interacts with SIS2 and VHS3, which regulate its activity.</text>
</comment>
<comment type="interaction">
    <interactant intactId="EBI-13807">
        <id>P26570</id>
    </interactant>
    <interactant intactId="EBI-26778">
        <id>P36076</id>
        <label>CAB3</label>
    </interactant>
    <organismsDiffer>false</organismsDiffer>
    <experiments>7</experiments>
</comment>
<comment type="interaction">
    <interactant intactId="EBI-13807">
        <id>P26570</id>
    </interactant>
    <interactant intactId="EBI-13815">
        <id>P33329</id>
        <label>PPZ2</label>
    </interactant>
    <organismsDiffer>false</organismsDiffer>
    <experiments>3</experiments>
</comment>
<comment type="interaction">
    <interactant intactId="EBI-13807">
        <id>P26570</id>
    </interactant>
    <interactant intactId="EBI-17250">
        <id>P36024</id>
        <label>SIS2</label>
    </interactant>
    <organismsDiffer>false</organismsDiffer>
    <experiments>8</experiments>
</comment>
<comment type="interaction">
    <interactant intactId="EBI-13807">
        <id>P26570</id>
    </interactant>
    <interactant intactId="EBI-30482">
        <id>Q08438</id>
        <label>VHS3</label>
    </interactant>
    <organismsDiffer>false</organismsDiffer>
    <experiments>5</experiments>
</comment>
<comment type="miscellaneous">
    <text evidence="5">Present with 217 molecules/cell in log phase SD medium.</text>
</comment>
<comment type="similarity">
    <text evidence="8">Belongs to the PPP phosphatase family. PP-Z subfamily.</text>
</comment>
<comment type="caution">
    <text evidence="9">Was originally thought to originate from a rabbit cDNA library and was known as protein phosphatase Z (PP-Z).</text>
</comment>
<proteinExistence type="evidence at protein level"/>
<sequence length="692" mass="77491">MGNSSSKSSKKDSHSNSSSRNPRPQVSRTETSHSVKSAKSNKSSRSRRSLPSSSTTNTNSNVPDPSTPSKPNLEVNHQRHSSHTNRYHFPSSSHSHSNSQNELLTTPSSSSTKRPSTSRRSSYNTKAAADLPPSMIQMEPKSPILKTNNSSTHVSKHKSSYSSTYYENALTDDDNDDKDNDISHTKRFSRSSNSRPSSIRSGSVSRRKSDVTHEEPNNGSYSSNNQENYLVQALTRSNSHASSLHSRKSSFGSDGNTAYSTPLNSPGLSKLTDHSGEYFTSNSTSSLNHHSSRDIYPSKHISNDDDIENSSQLSNIHASMENVNDKNNNITDSKKDPNEEFNDIMQSSGNKNAPKKFKKPIDIDETIQKLLDAGYAAKRTKNVCLKNNEILQICIKAREIFLSQPSLLELSPPVKIVGDVHGQYGDLLRLFTKCGFPPSSNYLFLGDYVDRGKQSLETILLLFCYKIKYPENFFLLRGNHECANVTRVYGFYDECKRRCNIKIWKTFIDTFNTLPLAAIVAGKIFCVHGGLSPVLNSMDEIRHVVRPTDVPDFGLINDLLWSDPTDSPNEWEDNERGVSYCYNKVAINKFLNKFGFDLVCRAHMVVEDGYEFFNDRSLVTVFSAPNYCGEFDNWGAVMSVSEGLLCSFELLDPLDSAALKQVMKKGRQERKLANQQQQMMETSITNDNESQQ</sequence>
<dbReference type="EC" id="3.1.3.16"/>
<dbReference type="EMBL" id="M86242">
    <property type="protein sequence ID" value="AAA34898.1"/>
    <property type="molecule type" value="Genomic_DNA"/>
</dbReference>
<dbReference type="EMBL" id="X74135">
    <property type="protein sequence ID" value="CAA52232.1"/>
    <property type="molecule type" value="Genomic_DNA"/>
</dbReference>
<dbReference type="EMBL" id="Z49810">
    <property type="protein sequence ID" value="CAA89936.1"/>
    <property type="molecule type" value="Genomic_DNA"/>
</dbReference>
<dbReference type="EMBL" id="BK006946">
    <property type="protein sequence ID" value="DAA09882.1"/>
    <property type="molecule type" value="Genomic_DNA"/>
</dbReference>
<dbReference type="PIR" id="S55103">
    <property type="entry name" value="PABY12"/>
</dbReference>
<dbReference type="RefSeq" id="NP_013696.1">
    <property type="nucleotide sequence ID" value="NM_001182374.1"/>
</dbReference>
<dbReference type="SMR" id="P26570"/>
<dbReference type="BioGRID" id="35153">
    <property type="interactions" value="350"/>
</dbReference>
<dbReference type="DIP" id="DIP-557N"/>
<dbReference type="FunCoup" id="P26570">
    <property type="interactions" value="438"/>
</dbReference>
<dbReference type="IntAct" id="P26570">
    <property type="interactions" value="61"/>
</dbReference>
<dbReference type="MINT" id="P26570"/>
<dbReference type="STRING" id="4932.YML016C"/>
<dbReference type="GlyGen" id="P26570">
    <property type="glycosylation" value="1 site"/>
</dbReference>
<dbReference type="iPTMnet" id="P26570"/>
<dbReference type="PaxDb" id="4932-YML016C"/>
<dbReference type="PeptideAtlas" id="P26570"/>
<dbReference type="EnsemblFungi" id="YML016C_mRNA">
    <property type="protein sequence ID" value="YML016C"/>
    <property type="gene ID" value="YML016C"/>
</dbReference>
<dbReference type="GeneID" id="854992"/>
<dbReference type="KEGG" id="sce:YML016C"/>
<dbReference type="AGR" id="SGD:S000004478"/>
<dbReference type="SGD" id="S000004478">
    <property type="gene designation" value="PPZ1"/>
</dbReference>
<dbReference type="VEuPathDB" id="FungiDB:YML016C"/>
<dbReference type="eggNOG" id="KOG0374">
    <property type="taxonomic scope" value="Eukaryota"/>
</dbReference>
<dbReference type="GeneTree" id="ENSGT00940000153472"/>
<dbReference type="HOGENOM" id="CLU_004962_3_0_1"/>
<dbReference type="InParanoid" id="P26570"/>
<dbReference type="OMA" id="IHASMEN"/>
<dbReference type="OrthoDB" id="1930084at2759"/>
<dbReference type="BioCyc" id="YEAST:G3O-32620-MONOMER"/>
<dbReference type="BioGRID-ORCS" id="854992">
    <property type="hits" value="0 hits in 10 CRISPR screens"/>
</dbReference>
<dbReference type="PRO" id="PR:P26570"/>
<dbReference type="Proteomes" id="UP000002311">
    <property type="component" value="Chromosome XIII"/>
</dbReference>
<dbReference type="RNAct" id="P26570">
    <property type="molecule type" value="protein"/>
</dbReference>
<dbReference type="GO" id="GO:0005737">
    <property type="term" value="C:cytoplasm"/>
    <property type="evidence" value="ECO:0007005"/>
    <property type="project" value="SGD"/>
</dbReference>
<dbReference type="GO" id="GO:0005634">
    <property type="term" value="C:nucleus"/>
    <property type="evidence" value="ECO:0000314"/>
    <property type="project" value="SGD"/>
</dbReference>
<dbReference type="GO" id="GO:0046872">
    <property type="term" value="F:metal ion binding"/>
    <property type="evidence" value="ECO:0007669"/>
    <property type="project" value="UniProtKB-KW"/>
</dbReference>
<dbReference type="GO" id="GO:0004722">
    <property type="term" value="F:protein serine/threonine phosphatase activity"/>
    <property type="evidence" value="ECO:0000314"/>
    <property type="project" value="SGD"/>
</dbReference>
<dbReference type="GO" id="GO:0006883">
    <property type="term" value="P:intracellular sodium ion homeostasis"/>
    <property type="evidence" value="ECO:0000315"/>
    <property type="project" value="SGD"/>
</dbReference>
<dbReference type="GO" id="GO:0008104">
    <property type="term" value="P:protein localization"/>
    <property type="evidence" value="ECO:0000315"/>
    <property type="project" value="SGD"/>
</dbReference>
<dbReference type="CDD" id="cd07414">
    <property type="entry name" value="MPP_PP1_PPKL"/>
    <property type="match status" value="1"/>
</dbReference>
<dbReference type="FunFam" id="3.60.21.10:FF:000006">
    <property type="entry name" value="Serine/threonine-protein phosphatase"/>
    <property type="match status" value="1"/>
</dbReference>
<dbReference type="Gene3D" id="3.60.21.10">
    <property type="match status" value="1"/>
</dbReference>
<dbReference type="InterPro" id="IPR004843">
    <property type="entry name" value="Calcineurin-like_PHP_ApaH"/>
</dbReference>
<dbReference type="InterPro" id="IPR029052">
    <property type="entry name" value="Metallo-depent_PP-like"/>
</dbReference>
<dbReference type="InterPro" id="IPR050341">
    <property type="entry name" value="PP1_catalytic_subunit"/>
</dbReference>
<dbReference type="InterPro" id="IPR011159">
    <property type="entry name" value="PPPtase_PPZ/Ppq1"/>
</dbReference>
<dbReference type="InterPro" id="IPR006186">
    <property type="entry name" value="Ser/Thr-sp_prot-phosphatase"/>
</dbReference>
<dbReference type="InterPro" id="IPR031675">
    <property type="entry name" value="STPPase_N"/>
</dbReference>
<dbReference type="PANTHER" id="PTHR11668">
    <property type="entry name" value="SERINE/THREONINE PROTEIN PHOSPHATASE"/>
    <property type="match status" value="1"/>
</dbReference>
<dbReference type="PANTHER" id="PTHR11668:SF484">
    <property type="entry name" value="SERINE_THREONINE-PROTEIN PHOSPHATASE PP-Z1-RELATED"/>
    <property type="match status" value="1"/>
</dbReference>
<dbReference type="Pfam" id="PF00149">
    <property type="entry name" value="Metallophos"/>
    <property type="match status" value="1"/>
</dbReference>
<dbReference type="Pfam" id="PF16891">
    <property type="entry name" value="STPPase_N"/>
    <property type="match status" value="1"/>
</dbReference>
<dbReference type="PIRSF" id="PIRSF000909">
    <property type="entry name" value="PPPtase_PPZ"/>
    <property type="match status" value="1"/>
</dbReference>
<dbReference type="PRINTS" id="PR00114">
    <property type="entry name" value="STPHPHTASE"/>
</dbReference>
<dbReference type="SMART" id="SM00156">
    <property type="entry name" value="PP2Ac"/>
    <property type="match status" value="1"/>
</dbReference>
<dbReference type="SUPFAM" id="SSF56300">
    <property type="entry name" value="Metallo-dependent phosphatases"/>
    <property type="match status" value="1"/>
</dbReference>
<dbReference type="PROSITE" id="PS00125">
    <property type="entry name" value="SER_THR_PHOSPHATASE"/>
    <property type="match status" value="1"/>
</dbReference>
<accession>P26570</accession>
<accession>D6VZF8</accession>
<accession>Q00979</accession>
<reference key="1">
    <citation type="journal article" date="1992" name="J. Biol. Chem.">
        <title>Molecular cloning and analysis of a yeast protein phosphatase with an unusual amino-terminal region.</title>
        <authorList>
            <person name="Posas F."/>
            <person name="Casamayor A."/>
            <person name="Morral N."/>
            <person name="Arino J."/>
        </authorList>
    </citation>
    <scope>NUCLEOTIDE SEQUENCE [GENOMIC DNA]</scope>
    <source>
        <strain>M5</strain>
    </source>
</reference>
<reference key="2">
    <citation type="journal article" date="1993" name="Eur. J. Biochem.">
        <title>Both isoforms of protein phosphatase Z are essential for the maintenance of cell size and integrity in Saccharomyces cerevisiae in response to osmotic stress.</title>
        <authorList>
            <person name="Hughes V."/>
            <person name="Mueller A."/>
            <person name="Stark M.J.R."/>
            <person name="Cohen P.T.W."/>
        </authorList>
    </citation>
    <scope>NUCLEOTIDE SEQUENCE [GENOMIC DNA]</scope>
    <source>
        <strain>AY926</strain>
    </source>
</reference>
<reference key="3">
    <citation type="journal article" date="1997" name="Nature">
        <title>The nucleotide sequence of Saccharomyces cerevisiae chromosome XIII.</title>
        <authorList>
            <person name="Bowman S."/>
            <person name="Churcher C.M."/>
            <person name="Badcock K."/>
            <person name="Brown D."/>
            <person name="Chillingworth T."/>
            <person name="Connor R."/>
            <person name="Dedman K."/>
            <person name="Devlin K."/>
            <person name="Gentles S."/>
            <person name="Hamlin N."/>
            <person name="Hunt S."/>
            <person name="Jagels K."/>
            <person name="Lye G."/>
            <person name="Moule S."/>
            <person name="Odell C."/>
            <person name="Pearson D."/>
            <person name="Rajandream M.A."/>
            <person name="Rice P."/>
            <person name="Skelton J."/>
            <person name="Walsh S.V."/>
            <person name="Whitehead S."/>
            <person name="Barrell B.G."/>
        </authorList>
    </citation>
    <scope>NUCLEOTIDE SEQUENCE [LARGE SCALE GENOMIC DNA]</scope>
    <source>
        <strain>ATCC 204508 / S288c</strain>
    </source>
</reference>
<reference key="4">
    <citation type="journal article" date="2014" name="G3 (Bethesda)">
        <title>The reference genome sequence of Saccharomyces cerevisiae: Then and now.</title>
        <authorList>
            <person name="Engel S.R."/>
            <person name="Dietrich F.S."/>
            <person name="Fisk D.G."/>
            <person name="Binkley G."/>
            <person name="Balakrishnan R."/>
            <person name="Costanzo M.C."/>
            <person name="Dwight S.S."/>
            <person name="Hitz B.C."/>
            <person name="Karra K."/>
            <person name="Nash R.S."/>
            <person name="Weng S."/>
            <person name="Wong E.D."/>
            <person name="Lloyd P."/>
            <person name="Skrzypek M.S."/>
            <person name="Miyasato S.R."/>
            <person name="Simison M."/>
            <person name="Cherry J.M."/>
        </authorList>
    </citation>
    <scope>GENOME REANNOTATION</scope>
    <source>
        <strain>ATCC 204508 / S288c</strain>
    </source>
</reference>
<reference key="5">
    <citation type="journal article" date="1990" name="FEBS Lett.">
        <title>Protein serine/threonine phosphatases; an expanding family.</title>
        <authorList>
            <person name="Cohen P.T.W."/>
            <person name="Brewis N.D."/>
            <person name="Hughes V."/>
            <person name="Mann D.J."/>
        </authorList>
    </citation>
    <scope>NUCLEOTIDE SEQUENCE [GENOMIC DNA] OF 345-692</scope>
</reference>
<reference key="6">
    <citation type="journal article" date="1991" name="Biochim. Biophys. Acta">
        <title>Protein phosphatase 2Bw and protein phosphatase Z are Saccharomyces cerevisiae enzymes.</title>
        <authorList>
            <person name="Da Cruz e Silva E.F."/>
            <person name="Hughes V."/>
            <person name="McDonald P."/>
            <person name="Stark M.J.R."/>
            <person name="Cohen P.T.W."/>
        </authorList>
    </citation>
    <scope>NUCLEOTIDE SEQUENCE [GENOMIC DNA] OF 389-610</scope>
</reference>
<reference key="7">
    <citation type="journal article" date="1998" name="Proc. Natl. Acad. Sci. U.S.A.">
        <title>The yeast halotolerance determinant Hal3p is an inhibitory subunit of the Ppz1p Ser/Thr protein phosphatase.</title>
        <authorList>
            <person name="de Nadal E."/>
            <person name="Clotet J."/>
            <person name="Posas F."/>
            <person name="Serrano R."/>
            <person name="Gomez N."/>
            <person name="Arino J."/>
        </authorList>
    </citation>
    <scope>INTERACTION WITH SIS2</scope>
</reference>
<reference key="8">
    <citation type="journal article" date="2003" name="Nature">
        <title>Global analysis of protein expression in yeast.</title>
        <authorList>
            <person name="Ghaemmaghami S."/>
            <person name="Huh W.-K."/>
            <person name="Bower K."/>
            <person name="Howson R.W."/>
            <person name="Belle A."/>
            <person name="Dephoure N."/>
            <person name="O'Shea E.K."/>
            <person name="Weissman J.S."/>
        </authorList>
    </citation>
    <scope>LEVEL OF PROTEIN EXPRESSION [LARGE SCALE ANALYSIS]</scope>
</reference>
<reference key="9">
    <citation type="journal article" date="2004" name="J. Biol. Chem.">
        <title>Functional characterization of the Saccharomyces cerevisiae VHS3 gene. A regulatory subunit of the Ppz1 protein phosphatase with novel, phosphatase-unrelated functions.</title>
        <authorList>
            <person name="Ruiz A."/>
            <person name="Munoz I."/>
            <person name="Serrano R."/>
            <person name="Gonzalez A."/>
            <person name="Simon E."/>
            <person name="Arino J."/>
        </authorList>
    </citation>
    <scope>INTERACTION WITH VHS3</scope>
</reference>
<reference key="10">
    <citation type="journal article" date="2007" name="J. Proteome Res.">
        <title>Large-scale phosphorylation analysis of alpha-factor-arrested Saccharomyces cerevisiae.</title>
        <authorList>
            <person name="Li X."/>
            <person name="Gerber S.A."/>
            <person name="Rudner A.D."/>
            <person name="Beausoleil S.A."/>
            <person name="Haas W."/>
            <person name="Villen J."/>
            <person name="Elias J.E."/>
            <person name="Gygi S.P."/>
        </authorList>
    </citation>
    <scope>PHOSPHORYLATION [LARGE SCALE ANALYSIS] AT SER-49; THR-171; THR-261 AND SER-265</scope>
    <scope>IDENTIFICATION BY MASS SPECTROMETRY [LARGE SCALE ANALYSIS]</scope>
    <source>
        <strain>ADR376</strain>
    </source>
</reference>
<reference key="11">
    <citation type="journal article" date="2009" name="Science">
        <title>Global analysis of Cdk1 substrate phosphorylation sites provides insights into evolution.</title>
        <authorList>
            <person name="Holt L.J."/>
            <person name="Tuch B.B."/>
            <person name="Villen J."/>
            <person name="Johnson A.D."/>
            <person name="Gygi S.P."/>
            <person name="Morgan D.O."/>
        </authorList>
    </citation>
    <scope>PHOSPHORYLATION [LARGE SCALE ANALYSIS] AT SER-222 AND SER-690</scope>
    <scope>IDENTIFICATION BY MASS SPECTROMETRY [LARGE SCALE ANALYSIS]</scope>
</reference>